<reference key="1">
    <citation type="journal article" date="2001" name="J. Bacteriol.">
        <title>Identification and characterization of a novel 38.5-kilodalton cell surface protein of Staphylococcus aureus with extended-spectrum binding activity for extracellular matrix and plasma proteins.</title>
        <authorList>
            <person name="Hussain M.S."/>
            <person name="Becker K."/>
            <person name="von Eiff C."/>
            <person name="Schrenzel J."/>
            <person name="Peters G."/>
            <person name="Herrmann M."/>
        </authorList>
    </citation>
    <scope>NUCLEOTIDE SEQUENCE [GENOMIC DNA]</scope>
    <scope>PROTEIN SEQUENCE OF 27-63</scope>
    <scope>BINDING ACTIVITY</scope>
    <scope>SUBCELLULAR LOCATION</scope>
</reference>
<reference key="2">
    <citation type="journal article" date="2008" name="J. Bacteriol.">
        <title>Genome sequence of Staphylococcus aureus strain Newman and comparative analysis of staphylococcal genomes: polymorphism and evolution of two major pathogenicity islands.</title>
        <authorList>
            <person name="Baba T."/>
            <person name="Bae T."/>
            <person name="Schneewind O."/>
            <person name="Takeuchi F."/>
            <person name="Hiramatsu K."/>
        </authorList>
    </citation>
    <scope>NUCLEOTIDE SEQUENCE [LARGE SCALE GENOMIC DNA]</scope>
    <source>
        <strain>Newman</strain>
    </source>
</reference>
<reference key="3">
    <citation type="journal article" date="2005" name="Microbiology">
        <title>Sae is essential for expression of the staphylococcal adhesins Eap and Emp.</title>
        <authorList>
            <person name="Harraghy N."/>
            <person name="Kormanec J."/>
            <person name="Wolz C."/>
            <person name="Homerova D."/>
            <person name="Goerke C."/>
            <person name="Ohlsen K."/>
            <person name="Qazi S."/>
            <person name="Hill P."/>
            <person name="Herrmann M."/>
        </authorList>
    </citation>
    <scope>INDUCTION</scope>
</reference>
<accession>A6QF98</accession>
<accession>P81684</accession>
<accession>Q9K2Q1</accession>
<accession>Q9L3L5</accession>
<feature type="signal peptide" evidence="1">
    <location>
        <begin position="1"/>
        <end position="26"/>
    </location>
</feature>
<feature type="chain" id="PRO_0000324104" description="Extracellular matrix protein-binding protein emp">
    <location>
        <begin position="27"/>
        <end position="340"/>
    </location>
</feature>
<proteinExistence type="evidence at protein level"/>
<evidence type="ECO:0000255" key="1"/>
<evidence type="ECO:0000269" key="2">
    <source>
    </source>
</evidence>
<evidence type="ECO:0000269" key="3">
    <source>
    </source>
</evidence>
<gene>
    <name type="primary">ssp</name>
    <name type="ordered locus">NWMN_0758</name>
</gene>
<dbReference type="EMBL" id="AJ271347">
    <property type="protein sequence ID" value="CAB67709.1"/>
    <property type="molecule type" value="Genomic_DNA"/>
</dbReference>
<dbReference type="EMBL" id="AP009351">
    <property type="protein sequence ID" value="BAF67030.1"/>
    <property type="molecule type" value="Genomic_DNA"/>
</dbReference>
<dbReference type="KEGG" id="sae:NWMN_0758"/>
<dbReference type="HOGENOM" id="CLU_078520_0_0_9"/>
<dbReference type="Proteomes" id="UP000006386">
    <property type="component" value="Chromosome"/>
</dbReference>
<dbReference type="GO" id="GO:0009986">
    <property type="term" value="C:cell surface"/>
    <property type="evidence" value="ECO:0007669"/>
    <property type="project" value="UniProtKB-SubCell"/>
</dbReference>
<comment type="function">
    <text>Adhesin that binds to the host cell extracellular matrix proteins fibronectin, fibrinogen, collagen, and vitronectin.</text>
</comment>
<comment type="subcellular location">
    <subcellularLocation>
        <location evidence="2">Cell surface</location>
    </subcellularLocation>
</comment>
<comment type="induction">
    <text evidence="3">Expressed in the stationary growth phase. Regulated by Sae, which is essential for emp transcription. Repressed in the presence of glucose as a result of a pH-mediated decrease in expression of sae. Also under control of both Agr and SarA.</text>
</comment>
<comment type="miscellaneous">
    <text>Strain Newman has emp expression enhanced compared with NCTC 8325 derivatives.</text>
</comment>
<keyword id="KW-0903">Direct protein sequencing</keyword>
<keyword id="KW-0732">Signal</keyword>
<protein>
    <recommendedName>
        <fullName>Extracellular matrix protein-binding protein emp</fullName>
    </recommendedName>
</protein>
<organism>
    <name type="scientific">Staphylococcus aureus (strain Newman)</name>
    <dbReference type="NCBI Taxonomy" id="426430"/>
    <lineage>
        <taxon>Bacteria</taxon>
        <taxon>Bacillati</taxon>
        <taxon>Bacillota</taxon>
        <taxon>Bacilli</taxon>
        <taxon>Bacillales</taxon>
        <taxon>Staphylococcaceae</taxon>
        <taxon>Staphylococcus</taxon>
    </lineage>
</organism>
<name>EMP_STAAE</name>
<sequence length="340" mass="38485">MKKKLLVLTMSTLFATQIMNSNHAKASVTESVDKKFVVPESGINKIIPAYDEFKNSPKVNVSNLTDNKNFVASEDKLNKIADSSAASKIVDKNFVVPESKLGNIVPEYKEINNRVNVATNNPASQQVDKHFVAKGPEVNRFITQNKVNHHFITTQTHYKKVITSYKSTHVHKHVNHAKDSINKHFIVKPSESPRYTHPSQSLIIKHHFAVPGYHAHKFVTPGHASIKINHFCVVPQINSFKVIPPYGHNSHRMHVPSFQNNTTATHQNAKVNKAYDYKYFYSYKVVKGVKKYFSFSQSNGYKIGKPSLNIKNVNYQYAVPSYSPTHYVPEFKGSLPAPRV</sequence>